<reference key="1">
    <citation type="submission" date="2003-10" db="EMBL/GenBank/DDBJ databases">
        <title>61 primate SINEs and the evolution of strepsirrhines.</title>
        <authorList>
            <person name="Roos C."/>
            <person name="Schmitz J."/>
            <person name="Zischler H."/>
        </authorList>
    </citation>
    <scope>NUCLEOTIDE SEQUENCE [GENOMIC DNA]</scope>
</reference>
<protein>
    <recommendedName>
        <fullName>Cytochrome b</fullName>
    </recommendedName>
    <alternativeName>
        <fullName>Complex III subunit 3</fullName>
    </alternativeName>
    <alternativeName>
        <fullName>Complex III subunit III</fullName>
    </alternativeName>
    <alternativeName>
        <fullName>Cytochrome b-c1 complex subunit 3</fullName>
    </alternativeName>
    <alternativeName>
        <fullName>Ubiquinol-cytochrome-c reductase complex cytochrome b subunit</fullName>
    </alternativeName>
</protein>
<geneLocation type="mitochondrion"/>
<dbReference type="EMBL" id="AY441446">
    <property type="protein sequence ID" value="AAS00127.1"/>
    <property type="molecule type" value="Genomic_DNA"/>
</dbReference>
<dbReference type="SMR" id="Q5VJ67"/>
<dbReference type="GO" id="GO:0005743">
    <property type="term" value="C:mitochondrial inner membrane"/>
    <property type="evidence" value="ECO:0007669"/>
    <property type="project" value="UniProtKB-SubCell"/>
</dbReference>
<dbReference type="GO" id="GO:0045275">
    <property type="term" value="C:respiratory chain complex III"/>
    <property type="evidence" value="ECO:0007669"/>
    <property type="project" value="InterPro"/>
</dbReference>
<dbReference type="GO" id="GO:0046872">
    <property type="term" value="F:metal ion binding"/>
    <property type="evidence" value="ECO:0007669"/>
    <property type="project" value="UniProtKB-KW"/>
</dbReference>
<dbReference type="GO" id="GO:0008121">
    <property type="term" value="F:ubiquinol-cytochrome-c reductase activity"/>
    <property type="evidence" value="ECO:0007669"/>
    <property type="project" value="InterPro"/>
</dbReference>
<dbReference type="GO" id="GO:0006122">
    <property type="term" value="P:mitochondrial electron transport, ubiquinol to cytochrome c"/>
    <property type="evidence" value="ECO:0007669"/>
    <property type="project" value="TreeGrafter"/>
</dbReference>
<dbReference type="CDD" id="cd00290">
    <property type="entry name" value="cytochrome_b_C"/>
    <property type="match status" value="1"/>
</dbReference>
<dbReference type="CDD" id="cd00284">
    <property type="entry name" value="Cytochrome_b_N"/>
    <property type="match status" value="1"/>
</dbReference>
<dbReference type="FunFam" id="1.20.810.10:FF:000002">
    <property type="entry name" value="Cytochrome b"/>
    <property type="match status" value="1"/>
</dbReference>
<dbReference type="Gene3D" id="1.20.810.10">
    <property type="entry name" value="Cytochrome Bc1 Complex, Chain C"/>
    <property type="match status" value="1"/>
</dbReference>
<dbReference type="InterPro" id="IPR005798">
    <property type="entry name" value="Cyt_b/b6_C"/>
</dbReference>
<dbReference type="InterPro" id="IPR036150">
    <property type="entry name" value="Cyt_b/b6_C_sf"/>
</dbReference>
<dbReference type="InterPro" id="IPR005797">
    <property type="entry name" value="Cyt_b/b6_N"/>
</dbReference>
<dbReference type="InterPro" id="IPR027387">
    <property type="entry name" value="Cytb/b6-like_sf"/>
</dbReference>
<dbReference type="InterPro" id="IPR030689">
    <property type="entry name" value="Cytochrome_b"/>
</dbReference>
<dbReference type="InterPro" id="IPR048260">
    <property type="entry name" value="Cytochrome_b_C_euk/bac"/>
</dbReference>
<dbReference type="InterPro" id="IPR048259">
    <property type="entry name" value="Cytochrome_b_N_euk/bac"/>
</dbReference>
<dbReference type="InterPro" id="IPR016174">
    <property type="entry name" value="Di-haem_cyt_TM"/>
</dbReference>
<dbReference type="PANTHER" id="PTHR19271">
    <property type="entry name" value="CYTOCHROME B"/>
    <property type="match status" value="1"/>
</dbReference>
<dbReference type="PANTHER" id="PTHR19271:SF16">
    <property type="entry name" value="CYTOCHROME B"/>
    <property type="match status" value="1"/>
</dbReference>
<dbReference type="Pfam" id="PF00032">
    <property type="entry name" value="Cytochrom_B_C"/>
    <property type="match status" value="1"/>
</dbReference>
<dbReference type="Pfam" id="PF00033">
    <property type="entry name" value="Cytochrome_B"/>
    <property type="match status" value="1"/>
</dbReference>
<dbReference type="PIRSF" id="PIRSF038885">
    <property type="entry name" value="COB"/>
    <property type="match status" value="1"/>
</dbReference>
<dbReference type="SUPFAM" id="SSF81648">
    <property type="entry name" value="a domain/subunit of cytochrome bc1 complex (Ubiquinol-cytochrome c reductase)"/>
    <property type="match status" value="1"/>
</dbReference>
<dbReference type="SUPFAM" id="SSF81342">
    <property type="entry name" value="Transmembrane di-heme cytochromes"/>
    <property type="match status" value="1"/>
</dbReference>
<dbReference type="PROSITE" id="PS51003">
    <property type="entry name" value="CYTB_CTER"/>
    <property type="match status" value="1"/>
</dbReference>
<dbReference type="PROSITE" id="PS51002">
    <property type="entry name" value="CYTB_NTER"/>
    <property type="match status" value="1"/>
</dbReference>
<proteinExistence type="inferred from homology"/>
<accession>Q5VJ67</accession>
<keyword id="KW-0249">Electron transport</keyword>
<keyword id="KW-0349">Heme</keyword>
<keyword id="KW-0408">Iron</keyword>
<keyword id="KW-0472">Membrane</keyword>
<keyword id="KW-0479">Metal-binding</keyword>
<keyword id="KW-0496">Mitochondrion</keyword>
<keyword id="KW-0999">Mitochondrion inner membrane</keyword>
<keyword id="KW-0679">Respiratory chain</keyword>
<keyword id="KW-0812">Transmembrane</keyword>
<keyword id="KW-1133">Transmembrane helix</keyword>
<keyword id="KW-0813">Transport</keyword>
<keyword id="KW-0830">Ubiquinone</keyword>
<comment type="function">
    <text evidence="2">Component of the ubiquinol-cytochrome c reductase complex (complex III or cytochrome b-c1 complex) that is part of the mitochondrial respiratory chain. The b-c1 complex mediates electron transfer from ubiquinol to cytochrome c. Contributes to the generation of a proton gradient across the mitochondrial membrane that is then used for ATP synthesis.</text>
</comment>
<comment type="cofactor">
    <cofactor evidence="2">
        <name>heme b</name>
        <dbReference type="ChEBI" id="CHEBI:60344"/>
    </cofactor>
    <text evidence="2">Binds 2 heme b groups non-covalently.</text>
</comment>
<comment type="subunit">
    <text evidence="2">The cytochrome bc1 complex contains 11 subunits: 3 respiratory subunits (MT-CYB, CYC1 and UQCRFS1), 2 core proteins (UQCRC1 and UQCRC2) and 6 low-molecular weight proteins (UQCRH/QCR6, UQCRB/QCR7, UQCRQ/QCR8, UQCR10/QCR9, UQCR11/QCR10 and a cleavage product of UQCRFS1). This cytochrome bc1 complex then forms a dimer.</text>
</comment>
<comment type="subcellular location">
    <subcellularLocation>
        <location evidence="2">Mitochondrion inner membrane</location>
        <topology evidence="2">Multi-pass membrane protein</topology>
    </subcellularLocation>
</comment>
<comment type="miscellaneous">
    <text evidence="1">Heme 1 (or BL or b562) is low-potential and absorbs at about 562 nm, and heme 2 (or BH or b566) is high-potential and absorbs at about 566 nm.</text>
</comment>
<comment type="similarity">
    <text evidence="3 4">Belongs to the cytochrome b family.</text>
</comment>
<comment type="caution">
    <text evidence="2">The full-length protein contains only eight transmembrane helices, not nine as predicted by bioinformatics tools.</text>
</comment>
<gene>
    <name type="primary">MT-CYB</name>
    <name type="synonym">COB</name>
    <name type="synonym">CYTB</name>
    <name type="synonym">MTCYB</name>
</gene>
<sequence length="379" mass="42588">MTNIRKNHPLMKIMNSSFIDLPAPSNISSWWNFGSLLGACLALQIITGLFLAMHYTADTTTAFSSVTHICRDVNYGWVIRYLHANGASMFFLCLFIHIGRGLYYGSFTLSETWNVGIILLFTVMATAFMGYVLPWGQMSFWGATVITNLLSAIPYIGTNLVEWIWGGFSVDKATLTRFFAFHFILPFIIAALVMVHLLFLHETGSNNPLGTSSDSDKIPFHPYYTIKDLLGLVLLALLAMTLVLFSPDLLGDPDNYTPANPLSTPPHIKPEWYFLFAYAILRSIPNKLGGVLALVFSILILAIIPMLHTAKQRSMTFRPLSQYMFWILTADLFILTWIGGQPVEYPLITIGQMASILYFSLILIVMPMVGLIENNMLKW</sequence>
<name>CYB_HAPAU</name>
<evidence type="ECO:0000250" key="1"/>
<evidence type="ECO:0000250" key="2">
    <source>
        <dbReference type="UniProtKB" id="P00157"/>
    </source>
</evidence>
<evidence type="ECO:0000255" key="3">
    <source>
        <dbReference type="PROSITE-ProRule" id="PRU00967"/>
    </source>
</evidence>
<evidence type="ECO:0000255" key="4">
    <source>
        <dbReference type="PROSITE-ProRule" id="PRU00968"/>
    </source>
</evidence>
<feature type="chain" id="PRO_0000061023" description="Cytochrome b">
    <location>
        <begin position="1"/>
        <end position="379"/>
    </location>
</feature>
<feature type="transmembrane region" description="Helical" evidence="2">
    <location>
        <begin position="33"/>
        <end position="53"/>
    </location>
</feature>
<feature type="transmembrane region" description="Helical" evidence="2">
    <location>
        <begin position="77"/>
        <end position="98"/>
    </location>
</feature>
<feature type="transmembrane region" description="Helical" evidence="2">
    <location>
        <begin position="113"/>
        <end position="133"/>
    </location>
</feature>
<feature type="transmembrane region" description="Helical" evidence="2">
    <location>
        <begin position="178"/>
        <end position="198"/>
    </location>
</feature>
<feature type="transmembrane region" description="Helical" evidence="2">
    <location>
        <begin position="226"/>
        <end position="246"/>
    </location>
</feature>
<feature type="transmembrane region" description="Helical" evidence="2">
    <location>
        <begin position="288"/>
        <end position="308"/>
    </location>
</feature>
<feature type="transmembrane region" description="Helical" evidence="2">
    <location>
        <begin position="320"/>
        <end position="340"/>
    </location>
</feature>
<feature type="transmembrane region" description="Helical" evidence="2">
    <location>
        <begin position="347"/>
        <end position="367"/>
    </location>
</feature>
<feature type="binding site" description="axial binding residue" evidence="2">
    <location>
        <position position="83"/>
    </location>
    <ligand>
        <name>heme b</name>
        <dbReference type="ChEBI" id="CHEBI:60344"/>
        <label>b562</label>
    </ligand>
    <ligandPart>
        <name>Fe</name>
        <dbReference type="ChEBI" id="CHEBI:18248"/>
    </ligandPart>
</feature>
<feature type="binding site" description="axial binding residue" evidence="2">
    <location>
        <position position="97"/>
    </location>
    <ligand>
        <name>heme b</name>
        <dbReference type="ChEBI" id="CHEBI:60344"/>
        <label>b566</label>
    </ligand>
    <ligandPart>
        <name>Fe</name>
        <dbReference type="ChEBI" id="CHEBI:18248"/>
    </ligandPart>
</feature>
<feature type="binding site" description="axial binding residue" evidence="2">
    <location>
        <position position="182"/>
    </location>
    <ligand>
        <name>heme b</name>
        <dbReference type="ChEBI" id="CHEBI:60344"/>
        <label>b562</label>
    </ligand>
    <ligandPart>
        <name>Fe</name>
        <dbReference type="ChEBI" id="CHEBI:18248"/>
    </ligandPart>
</feature>
<feature type="binding site" description="axial binding residue" evidence="2">
    <location>
        <position position="196"/>
    </location>
    <ligand>
        <name>heme b</name>
        <dbReference type="ChEBI" id="CHEBI:60344"/>
        <label>b566</label>
    </ligand>
    <ligandPart>
        <name>Fe</name>
        <dbReference type="ChEBI" id="CHEBI:18248"/>
    </ligandPart>
</feature>
<feature type="binding site" evidence="2">
    <location>
        <position position="201"/>
    </location>
    <ligand>
        <name>a ubiquinone</name>
        <dbReference type="ChEBI" id="CHEBI:16389"/>
    </ligand>
</feature>
<organism>
    <name type="scientific">Hapalemur aureus</name>
    <name type="common">Golden bamboo lemur</name>
    <dbReference type="NCBI Taxonomy" id="122222"/>
    <lineage>
        <taxon>Eukaryota</taxon>
        <taxon>Metazoa</taxon>
        <taxon>Chordata</taxon>
        <taxon>Craniata</taxon>
        <taxon>Vertebrata</taxon>
        <taxon>Euteleostomi</taxon>
        <taxon>Mammalia</taxon>
        <taxon>Eutheria</taxon>
        <taxon>Euarchontoglires</taxon>
        <taxon>Primates</taxon>
        <taxon>Strepsirrhini</taxon>
        <taxon>Lemuriformes</taxon>
        <taxon>Lemuridae</taxon>
        <taxon>Hapalemur</taxon>
    </lineage>
</organism>